<accession>Q8NW58</accession>
<keyword id="KW-0963">Cytoplasm</keyword>
<keyword id="KW-0235">DNA replication</keyword>
<keyword id="KW-0239">DNA-directed DNA polymerase</keyword>
<keyword id="KW-0548">Nucleotidyltransferase</keyword>
<keyword id="KW-0808">Transferase</keyword>
<dbReference type="EC" id="2.7.7.7"/>
<dbReference type="EMBL" id="BA000033">
    <property type="protein sequence ID" value="BAB95511.1"/>
    <property type="molecule type" value="Genomic_DNA"/>
</dbReference>
<dbReference type="RefSeq" id="WP_000226910.1">
    <property type="nucleotide sequence ID" value="NC_003923.1"/>
</dbReference>
<dbReference type="SMR" id="Q8NW58"/>
<dbReference type="KEGG" id="sam:MW1646"/>
<dbReference type="HOGENOM" id="CLU_001600_0_0_9"/>
<dbReference type="GO" id="GO:0005737">
    <property type="term" value="C:cytoplasm"/>
    <property type="evidence" value="ECO:0007669"/>
    <property type="project" value="UniProtKB-SubCell"/>
</dbReference>
<dbReference type="GO" id="GO:0008408">
    <property type="term" value="F:3'-5' exonuclease activity"/>
    <property type="evidence" value="ECO:0007669"/>
    <property type="project" value="InterPro"/>
</dbReference>
<dbReference type="GO" id="GO:0003887">
    <property type="term" value="F:DNA-directed DNA polymerase activity"/>
    <property type="evidence" value="ECO:0007669"/>
    <property type="project" value="UniProtKB-KW"/>
</dbReference>
<dbReference type="GO" id="GO:0003676">
    <property type="term" value="F:nucleic acid binding"/>
    <property type="evidence" value="ECO:0007669"/>
    <property type="project" value="InterPro"/>
</dbReference>
<dbReference type="GO" id="GO:0006260">
    <property type="term" value="P:DNA replication"/>
    <property type="evidence" value="ECO:0007669"/>
    <property type="project" value="UniProtKB-KW"/>
</dbReference>
<dbReference type="CDD" id="cd04485">
    <property type="entry name" value="DnaE_OBF"/>
    <property type="match status" value="1"/>
</dbReference>
<dbReference type="CDD" id="cd07431">
    <property type="entry name" value="PHP_PolIIIA"/>
    <property type="match status" value="1"/>
</dbReference>
<dbReference type="Gene3D" id="1.10.150.870">
    <property type="match status" value="1"/>
</dbReference>
<dbReference type="Gene3D" id="1.10.10.1600">
    <property type="entry name" value="Bacterial DNA polymerase III alpha subunit, thumb domain"/>
    <property type="match status" value="1"/>
</dbReference>
<dbReference type="Gene3D" id="3.20.20.140">
    <property type="entry name" value="Metal-dependent hydrolases"/>
    <property type="match status" value="1"/>
</dbReference>
<dbReference type="InterPro" id="IPR011708">
    <property type="entry name" value="DNA_pol3_alpha_NTPase_dom"/>
</dbReference>
<dbReference type="InterPro" id="IPR041931">
    <property type="entry name" value="DNA_pol3_alpha_thumb_dom"/>
</dbReference>
<dbReference type="InterPro" id="IPR040982">
    <property type="entry name" value="DNA_pol3_finger"/>
</dbReference>
<dbReference type="InterPro" id="IPR004805">
    <property type="entry name" value="DnaE2/DnaE/PolC"/>
</dbReference>
<dbReference type="InterPro" id="IPR029460">
    <property type="entry name" value="DNAPol_HHH"/>
</dbReference>
<dbReference type="InterPro" id="IPR004365">
    <property type="entry name" value="NA-bd_OB_tRNA"/>
</dbReference>
<dbReference type="InterPro" id="IPR004013">
    <property type="entry name" value="PHP_dom"/>
</dbReference>
<dbReference type="InterPro" id="IPR003141">
    <property type="entry name" value="Pol/His_phosphatase_N"/>
</dbReference>
<dbReference type="InterPro" id="IPR016195">
    <property type="entry name" value="Pol/histidinol_Pase-like"/>
</dbReference>
<dbReference type="NCBIfam" id="TIGR00594">
    <property type="entry name" value="polc"/>
    <property type="match status" value="1"/>
</dbReference>
<dbReference type="PANTHER" id="PTHR32294">
    <property type="entry name" value="DNA POLYMERASE III SUBUNIT ALPHA"/>
    <property type="match status" value="1"/>
</dbReference>
<dbReference type="PANTHER" id="PTHR32294:SF0">
    <property type="entry name" value="DNA POLYMERASE III SUBUNIT ALPHA"/>
    <property type="match status" value="1"/>
</dbReference>
<dbReference type="Pfam" id="PF07733">
    <property type="entry name" value="DNA_pol3_alpha"/>
    <property type="match status" value="1"/>
</dbReference>
<dbReference type="Pfam" id="PF17657">
    <property type="entry name" value="DNA_pol3_finger"/>
    <property type="match status" value="1"/>
</dbReference>
<dbReference type="Pfam" id="PF14579">
    <property type="entry name" value="HHH_6"/>
    <property type="match status" value="1"/>
</dbReference>
<dbReference type="Pfam" id="PF02811">
    <property type="entry name" value="PHP"/>
    <property type="match status" value="1"/>
</dbReference>
<dbReference type="Pfam" id="PF01336">
    <property type="entry name" value="tRNA_anti-codon"/>
    <property type="match status" value="1"/>
</dbReference>
<dbReference type="SMART" id="SM00481">
    <property type="entry name" value="POLIIIAc"/>
    <property type="match status" value="1"/>
</dbReference>
<dbReference type="SUPFAM" id="SSF89550">
    <property type="entry name" value="PHP domain-like"/>
    <property type="match status" value="1"/>
</dbReference>
<evidence type="ECO:0000250" key="1"/>
<evidence type="ECO:0000305" key="2"/>
<gene>
    <name type="primary">dnaE</name>
    <name type="ordered locus">MW1646</name>
</gene>
<protein>
    <recommendedName>
        <fullName>DNA polymerase III subunit alpha</fullName>
        <ecNumber>2.7.7.7</ecNumber>
    </recommendedName>
</protein>
<organism>
    <name type="scientific">Staphylococcus aureus (strain MW2)</name>
    <dbReference type="NCBI Taxonomy" id="196620"/>
    <lineage>
        <taxon>Bacteria</taxon>
        <taxon>Bacillati</taxon>
        <taxon>Bacillota</taxon>
        <taxon>Bacilli</taxon>
        <taxon>Bacillales</taxon>
        <taxon>Staphylococcaceae</taxon>
        <taxon>Staphylococcus</taxon>
    </lineage>
</organism>
<name>DPO3A_STAAW</name>
<feature type="chain" id="PRO_0000103345" description="DNA polymerase III subunit alpha">
    <location>
        <begin position="1"/>
        <end position="1065"/>
    </location>
</feature>
<proteinExistence type="inferred from homology"/>
<reference key="1">
    <citation type="journal article" date="2002" name="Lancet">
        <title>Genome and virulence determinants of high virulence community-acquired MRSA.</title>
        <authorList>
            <person name="Baba T."/>
            <person name="Takeuchi F."/>
            <person name="Kuroda M."/>
            <person name="Yuzawa H."/>
            <person name="Aoki K."/>
            <person name="Oguchi A."/>
            <person name="Nagai Y."/>
            <person name="Iwama N."/>
            <person name="Asano K."/>
            <person name="Naimi T."/>
            <person name="Kuroda H."/>
            <person name="Cui L."/>
            <person name="Yamamoto K."/>
            <person name="Hiramatsu K."/>
        </authorList>
    </citation>
    <scope>NUCLEOTIDE SEQUENCE [LARGE SCALE GENOMIC DNA]</scope>
    <source>
        <strain>MW2</strain>
    </source>
</reference>
<sequence length="1065" mass="122915">MVAYLNIHTAYDLLNSSLKIEDAVRLAVSENVDALAITDTNVLYGFPKFYDACIANNIKPIFGMTIYVTNGLNTVETVVLAKNNDGLKDLYQLSSEIKMNALEHVSFELLKRFSNNMIIIFKKVGDQHRDIVQVFETHNDTYMDHLSISIQGRKHVWIQNVCYQTRQDADTISALAAIRDNTKLDLIHDQEDFGAHFLTEKEINQLDINQEYLTQVDVIAQKCDAELKYHQSLLPQYETPNDESAKKYLWRVLVTQLKKLELNYDVYLERLKYEYKVITNMGFEDYFLIVSDLIHYAKTNDVMVGPGRGSSAGSLVSYLLGITTIDPIKFNLLFERFLNPERVTMPDIDIDFEDTRRERVIQYVQEKYGELHVSGIVTFGHLLARAVARDVGRIMGFDEVTLNEISSLIPHKLGITLDEAYQIDDFKKFVHRNHRHERWFSICKKLEGLPRHTSTHAAGIIINDHPLYEYAPLTKGDTGLLTQWTMTEAERIGLLKIDFLGLRNLSIIHQILTQVKKDLGINIDIEKIPFDDQKVFELLSQGDTTGIFQLESDGVRSVLKKLKPEHFEDIVAVTSLYRPGPMEEIPTYITRRHDPSKVQYLHPHLEPILKNTYGVIIYQEQIMQIASTFANFSYGEADILRRAMSKKNRAVLESERQHFIEGAKQNGYHEDISKQIFDLILKFADYGFPRAHAVSYSKIAYIMSFLKVHYPNYFYANILSNVIGSEKKTAQMIEEAKKQGITILPPNINESHWFYKPSQEGIYLSIGTIKGVGYQSVKVIVDERYQNGKFKDFFDFARRIPKRVKTRKLLEALILVGAFDAFGKTRSTLLQAIDQVLDGDLNIEQDGFLFDILTPKQMYEDKEELPDALISQYEKEYLGFYVSQHPVDKKFVAKQYLTIFKLSNAQNNKPILVQFDKVKQIRTKNGQNMAFVTLNDGIETLDGVIFPNQFKKYEELLSHNDLFIVSGKFDHRKQQRQLIINEIQTLATFEEQKLAFAKQIIIRNKSQIDMFEEMIKATKENANDVVLSFYDETIKQMTTLGYINQKDSMFNNFIQSFNPSDIRLI</sequence>
<comment type="function">
    <text evidence="1">DNA polymerase III is a complex, multichain enzyme responsible for most of the replicative synthesis in bacteria. This DNA polymerase also exhibits 3' to 5' exonuclease activity. The alpha chain is the DNA polymerase (By similarity).</text>
</comment>
<comment type="catalytic activity">
    <reaction>
        <text>DNA(n) + a 2'-deoxyribonucleoside 5'-triphosphate = DNA(n+1) + diphosphate</text>
        <dbReference type="Rhea" id="RHEA:22508"/>
        <dbReference type="Rhea" id="RHEA-COMP:17339"/>
        <dbReference type="Rhea" id="RHEA-COMP:17340"/>
        <dbReference type="ChEBI" id="CHEBI:33019"/>
        <dbReference type="ChEBI" id="CHEBI:61560"/>
        <dbReference type="ChEBI" id="CHEBI:173112"/>
        <dbReference type="EC" id="2.7.7.7"/>
    </reaction>
</comment>
<comment type="subunit">
    <text evidence="1">DNA polymerase III contains a core (composed of alpha, epsilon and theta chains) that associates with a tau subunit. This core dimerizes to form the PolIII' complex. PolIII' associates with the gamma complex (composed of gamma, delta, delta', psi and chi chains) and with the beta chain to form the complete DNA polymerase III complex (By similarity).</text>
</comment>
<comment type="subcellular location">
    <subcellularLocation>
        <location evidence="1">Cytoplasm</location>
    </subcellularLocation>
</comment>
<comment type="similarity">
    <text evidence="2">Belongs to the DNA polymerase type-C family. DnaE subfamily.</text>
</comment>